<dbReference type="EMBL" id="CP000702">
    <property type="protein sequence ID" value="ABQ47355.1"/>
    <property type="molecule type" value="Genomic_DNA"/>
</dbReference>
<dbReference type="RefSeq" id="WP_011943814.1">
    <property type="nucleotide sequence ID" value="NC_009486.1"/>
</dbReference>
<dbReference type="SMR" id="A5IMD2"/>
<dbReference type="STRING" id="390874.Tpet_1341"/>
<dbReference type="KEGG" id="tpt:Tpet_1341"/>
<dbReference type="eggNOG" id="COG0103">
    <property type="taxonomic scope" value="Bacteria"/>
</dbReference>
<dbReference type="HOGENOM" id="CLU_046483_2_1_0"/>
<dbReference type="Proteomes" id="UP000006558">
    <property type="component" value="Chromosome"/>
</dbReference>
<dbReference type="GO" id="GO:0022627">
    <property type="term" value="C:cytosolic small ribosomal subunit"/>
    <property type="evidence" value="ECO:0007669"/>
    <property type="project" value="TreeGrafter"/>
</dbReference>
<dbReference type="GO" id="GO:0003723">
    <property type="term" value="F:RNA binding"/>
    <property type="evidence" value="ECO:0007669"/>
    <property type="project" value="TreeGrafter"/>
</dbReference>
<dbReference type="GO" id="GO:0003735">
    <property type="term" value="F:structural constituent of ribosome"/>
    <property type="evidence" value="ECO:0007669"/>
    <property type="project" value="InterPro"/>
</dbReference>
<dbReference type="GO" id="GO:0006412">
    <property type="term" value="P:translation"/>
    <property type="evidence" value="ECO:0007669"/>
    <property type="project" value="UniProtKB-UniRule"/>
</dbReference>
<dbReference type="FunFam" id="3.30.230.10:FF:000001">
    <property type="entry name" value="30S ribosomal protein S9"/>
    <property type="match status" value="1"/>
</dbReference>
<dbReference type="Gene3D" id="3.30.230.10">
    <property type="match status" value="1"/>
</dbReference>
<dbReference type="HAMAP" id="MF_00532_B">
    <property type="entry name" value="Ribosomal_uS9_B"/>
    <property type="match status" value="1"/>
</dbReference>
<dbReference type="InterPro" id="IPR020568">
    <property type="entry name" value="Ribosomal_Su5_D2-typ_SF"/>
</dbReference>
<dbReference type="InterPro" id="IPR000754">
    <property type="entry name" value="Ribosomal_uS9"/>
</dbReference>
<dbReference type="InterPro" id="IPR023035">
    <property type="entry name" value="Ribosomal_uS9_bac/plastid"/>
</dbReference>
<dbReference type="InterPro" id="IPR020574">
    <property type="entry name" value="Ribosomal_uS9_CS"/>
</dbReference>
<dbReference type="InterPro" id="IPR014721">
    <property type="entry name" value="Ribsml_uS5_D2-typ_fold_subgr"/>
</dbReference>
<dbReference type="NCBIfam" id="NF001099">
    <property type="entry name" value="PRK00132.1"/>
    <property type="match status" value="1"/>
</dbReference>
<dbReference type="PANTHER" id="PTHR21569">
    <property type="entry name" value="RIBOSOMAL PROTEIN S9"/>
    <property type="match status" value="1"/>
</dbReference>
<dbReference type="PANTHER" id="PTHR21569:SF1">
    <property type="entry name" value="SMALL RIBOSOMAL SUBUNIT PROTEIN US9M"/>
    <property type="match status" value="1"/>
</dbReference>
<dbReference type="Pfam" id="PF00380">
    <property type="entry name" value="Ribosomal_S9"/>
    <property type="match status" value="1"/>
</dbReference>
<dbReference type="SUPFAM" id="SSF54211">
    <property type="entry name" value="Ribosomal protein S5 domain 2-like"/>
    <property type="match status" value="1"/>
</dbReference>
<dbReference type="PROSITE" id="PS00360">
    <property type="entry name" value="RIBOSOMAL_S9"/>
    <property type="match status" value="1"/>
</dbReference>
<accession>A5IMD2</accession>
<evidence type="ECO:0000255" key="1">
    <source>
        <dbReference type="HAMAP-Rule" id="MF_00532"/>
    </source>
</evidence>
<evidence type="ECO:0000256" key="2">
    <source>
        <dbReference type="SAM" id="MobiDB-lite"/>
    </source>
</evidence>
<evidence type="ECO:0000305" key="3"/>
<protein>
    <recommendedName>
        <fullName evidence="1">Small ribosomal subunit protein uS9</fullName>
    </recommendedName>
    <alternativeName>
        <fullName evidence="3">30S ribosomal protein S9</fullName>
    </alternativeName>
</protein>
<proteinExistence type="inferred from homology"/>
<gene>
    <name evidence="1" type="primary">rpsI</name>
    <name type="ordered locus">Tpet_1341</name>
</gene>
<keyword id="KW-0687">Ribonucleoprotein</keyword>
<keyword id="KW-0689">Ribosomal protein</keyword>
<sequence>MAEVIGYYGTGRRKTAVARVYLRPGEGKVKVNGKEYESLNDYFKNPAWTKHAIEPLEVTNTLGKFDLVIRVNGGGLSGQSGAVRLGIARALLQYDQKLRPVLKKYKMLTRDPREVERKKYGLKKARRAPQFSKR</sequence>
<feature type="chain" id="PRO_1000051358" description="Small ribosomal subunit protein uS9">
    <location>
        <begin position="1"/>
        <end position="134"/>
    </location>
</feature>
<feature type="region of interest" description="Disordered" evidence="2">
    <location>
        <begin position="113"/>
        <end position="134"/>
    </location>
</feature>
<feature type="compositionally biased region" description="Basic residues" evidence="2">
    <location>
        <begin position="120"/>
        <end position="134"/>
    </location>
</feature>
<comment type="similarity">
    <text evidence="1">Belongs to the universal ribosomal protein uS9 family.</text>
</comment>
<organism>
    <name type="scientific">Thermotoga petrophila (strain ATCC BAA-488 / DSM 13995 / JCM 10881 / RKU-1)</name>
    <dbReference type="NCBI Taxonomy" id="390874"/>
    <lineage>
        <taxon>Bacteria</taxon>
        <taxon>Thermotogati</taxon>
        <taxon>Thermotogota</taxon>
        <taxon>Thermotogae</taxon>
        <taxon>Thermotogales</taxon>
        <taxon>Thermotogaceae</taxon>
        <taxon>Thermotoga</taxon>
    </lineage>
</organism>
<reference key="1">
    <citation type="submission" date="2007-05" db="EMBL/GenBank/DDBJ databases">
        <title>Complete sequence of Thermotoga petrophila RKU-1.</title>
        <authorList>
            <consortium name="US DOE Joint Genome Institute"/>
            <person name="Copeland A."/>
            <person name="Lucas S."/>
            <person name="Lapidus A."/>
            <person name="Barry K."/>
            <person name="Glavina del Rio T."/>
            <person name="Dalin E."/>
            <person name="Tice H."/>
            <person name="Pitluck S."/>
            <person name="Sims D."/>
            <person name="Brettin T."/>
            <person name="Bruce D."/>
            <person name="Detter J.C."/>
            <person name="Han C."/>
            <person name="Tapia R."/>
            <person name="Schmutz J."/>
            <person name="Larimer F."/>
            <person name="Land M."/>
            <person name="Hauser L."/>
            <person name="Kyrpides N."/>
            <person name="Mikhailova N."/>
            <person name="Nelson K."/>
            <person name="Gogarten J.P."/>
            <person name="Noll K."/>
            <person name="Richardson P."/>
        </authorList>
    </citation>
    <scope>NUCLEOTIDE SEQUENCE [LARGE SCALE GENOMIC DNA]</scope>
    <source>
        <strain>ATCC BAA-488 / DSM 13995 / JCM 10881 / RKU-1</strain>
    </source>
</reference>
<name>RS9_THEP1</name>